<feature type="chain" id="PRO_0000305654" description="Phosphoglucosamine mutase">
    <location>
        <begin position="1"/>
        <end position="445"/>
    </location>
</feature>
<feature type="active site" description="Phosphoserine intermediate" evidence="1">
    <location>
        <position position="102"/>
    </location>
</feature>
<feature type="binding site" description="via phosphate group" evidence="1">
    <location>
        <position position="102"/>
    </location>
    <ligand>
        <name>Mg(2+)</name>
        <dbReference type="ChEBI" id="CHEBI:18420"/>
    </ligand>
</feature>
<feature type="binding site" evidence="1">
    <location>
        <position position="240"/>
    </location>
    <ligand>
        <name>Mg(2+)</name>
        <dbReference type="ChEBI" id="CHEBI:18420"/>
    </ligand>
</feature>
<feature type="binding site" evidence="1">
    <location>
        <position position="242"/>
    </location>
    <ligand>
        <name>Mg(2+)</name>
        <dbReference type="ChEBI" id="CHEBI:18420"/>
    </ligand>
</feature>
<feature type="binding site" evidence="1">
    <location>
        <position position="244"/>
    </location>
    <ligand>
        <name>Mg(2+)</name>
        <dbReference type="ChEBI" id="CHEBI:18420"/>
    </ligand>
</feature>
<feature type="modified residue" description="Phosphoserine" evidence="1">
    <location>
        <position position="102"/>
    </location>
</feature>
<proteinExistence type="inferred from homology"/>
<evidence type="ECO:0000255" key="1">
    <source>
        <dbReference type="HAMAP-Rule" id="MF_01554"/>
    </source>
</evidence>
<evidence type="ECO:0000305" key="2"/>
<sequence>MARLFGTDGVRGVANRDLTAELALALGSAAARRLSTAGHARRRVAVVGRDPRASGEMLEAAVIAGLTSEGVDALRVGVLPTPAVAYLTSAYDADFGVMISASHNPMPDNGIKIFGPGGHKLDDATEDRIAELVQQGPGERPVGAGIGRVVDAPDALDRYLRHVGKAVTTRLDALTVVVDCAHGAASAAAPLAYRAAGANVLTINADPNGLNINDGCGSTHMETLQAAVVSYGADLGLAHDGDADRCLAVDANGRVIDGDAIMVVLALAMRESGELASDTLVATVMSNLGLHLAMRDAGIEVRTTSVGDRYVLEELRAGSYSLGGEQSGHIVMPSMGTTGDGILTGLRLMSRMAQTRKSLAALAEPMHTLPQVLINVQVADKTTVAQAPSVQSAVAEAEAALGDTGRILLRPSGTEQVVRVMVEAADEDTARQLAVRVAESVSEQR</sequence>
<name>GLMM_MYCSK</name>
<accession>A1UC06</accession>
<gene>
    <name evidence="1" type="primary">glmM</name>
    <name type="ordered locus">Mkms_1151</name>
</gene>
<organism>
    <name type="scientific">Mycobacterium sp. (strain KMS)</name>
    <dbReference type="NCBI Taxonomy" id="189918"/>
    <lineage>
        <taxon>Bacteria</taxon>
        <taxon>Bacillati</taxon>
        <taxon>Actinomycetota</taxon>
        <taxon>Actinomycetes</taxon>
        <taxon>Mycobacteriales</taxon>
        <taxon>Mycobacteriaceae</taxon>
        <taxon>Mycobacterium</taxon>
    </lineage>
</organism>
<keyword id="KW-0413">Isomerase</keyword>
<keyword id="KW-0460">Magnesium</keyword>
<keyword id="KW-0479">Metal-binding</keyword>
<keyword id="KW-0597">Phosphoprotein</keyword>
<comment type="function">
    <text evidence="1">Catalyzes the conversion of glucosamine-6-phosphate to glucosamine-1-phosphate.</text>
</comment>
<comment type="catalytic activity">
    <reaction evidence="1">
        <text>alpha-D-glucosamine 1-phosphate = D-glucosamine 6-phosphate</text>
        <dbReference type="Rhea" id="RHEA:23424"/>
        <dbReference type="ChEBI" id="CHEBI:58516"/>
        <dbReference type="ChEBI" id="CHEBI:58725"/>
        <dbReference type="EC" id="5.4.2.10"/>
    </reaction>
</comment>
<comment type="cofactor">
    <cofactor evidence="1">
        <name>Mg(2+)</name>
        <dbReference type="ChEBI" id="CHEBI:18420"/>
    </cofactor>
    <text evidence="1">Binds 1 Mg(2+) ion per subunit.</text>
</comment>
<comment type="PTM">
    <text evidence="1">Activated by phosphorylation.</text>
</comment>
<comment type="similarity">
    <text evidence="1">Belongs to the phosphohexose mutase family.</text>
</comment>
<comment type="sequence caution" evidence="2">
    <conflict type="erroneous initiation">
        <sequence resource="EMBL-CDS" id="ABL90364"/>
    </conflict>
</comment>
<reference key="1">
    <citation type="submission" date="2006-12" db="EMBL/GenBank/DDBJ databases">
        <title>Complete sequence of chromosome of Mycobacterium sp. KMS.</title>
        <authorList>
            <consortium name="US DOE Joint Genome Institute"/>
            <person name="Copeland A."/>
            <person name="Lucas S."/>
            <person name="Lapidus A."/>
            <person name="Barry K."/>
            <person name="Detter J.C."/>
            <person name="Glavina del Rio T."/>
            <person name="Hammon N."/>
            <person name="Israni S."/>
            <person name="Dalin E."/>
            <person name="Tice H."/>
            <person name="Pitluck S."/>
            <person name="Kiss H."/>
            <person name="Brettin T."/>
            <person name="Bruce D."/>
            <person name="Han C."/>
            <person name="Tapia R."/>
            <person name="Gilna P."/>
            <person name="Schmutz J."/>
            <person name="Larimer F."/>
            <person name="Land M."/>
            <person name="Hauser L."/>
            <person name="Kyrpides N."/>
            <person name="Mikhailova N."/>
            <person name="Miller C.D."/>
            <person name="Richardson P."/>
        </authorList>
    </citation>
    <scope>NUCLEOTIDE SEQUENCE [LARGE SCALE GENOMIC DNA]</scope>
    <source>
        <strain>KMS</strain>
    </source>
</reference>
<protein>
    <recommendedName>
        <fullName evidence="1">Phosphoglucosamine mutase</fullName>
        <ecNumber evidence="1">5.4.2.10</ecNumber>
    </recommendedName>
</protein>
<dbReference type="EC" id="5.4.2.10" evidence="1"/>
<dbReference type="EMBL" id="CP000518">
    <property type="protein sequence ID" value="ABL90364.1"/>
    <property type="status" value="ALT_INIT"/>
    <property type="molecule type" value="Genomic_DNA"/>
</dbReference>
<dbReference type="SMR" id="A1UC06"/>
<dbReference type="STRING" id="189918.Mkms_1151"/>
<dbReference type="KEGG" id="mkm:Mkms_1151"/>
<dbReference type="HOGENOM" id="CLU_016950_7_0_11"/>
<dbReference type="OrthoDB" id="9803322at2"/>
<dbReference type="GO" id="GO:0005829">
    <property type="term" value="C:cytosol"/>
    <property type="evidence" value="ECO:0007669"/>
    <property type="project" value="TreeGrafter"/>
</dbReference>
<dbReference type="GO" id="GO:0000287">
    <property type="term" value="F:magnesium ion binding"/>
    <property type="evidence" value="ECO:0007669"/>
    <property type="project" value="UniProtKB-UniRule"/>
</dbReference>
<dbReference type="GO" id="GO:0008966">
    <property type="term" value="F:phosphoglucosamine mutase activity"/>
    <property type="evidence" value="ECO:0007669"/>
    <property type="project" value="UniProtKB-UniRule"/>
</dbReference>
<dbReference type="GO" id="GO:0004615">
    <property type="term" value="F:phosphomannomutase activity"/>
    <property type="evidence" value="ECO:0007669"/>
    <property type="project" value="TreeGrafter"/>
</dbReference>
<dbReference type="GO" id="GO:0005975">
    <property type="term" value="P:carbohydrate metabolic process"/>
    <property type="evidence" value="ECO:0007669"/>
    <property type="project" value="InterPro"/>
</dbReference>
<dbReference type="GO" id="GO:0009252">
    <property type="term" value="P:peptidoglycan biosynthetic process"/>
    <property type="evidence" value="ECO:0007669"/>
    <property type="project" value="TreeGrafter"/>
</dbReference>
<dbReference type="GO" id="GO:0006048">
    <property type="term" value="P:UDP-N-acetylglucosamine biosynthetic process"/>
    <property type="evidence" value="ECO:0007669"/>
    <property type="project" value="TreeGrafter"/>
</dbReference>
<dbReference type="CDD" id="cd05802">
    <property type="entry name" value="GlmM"/>
    <property type="match status" value="1"/>
</dbReference>
<dbReference type="FunFam" id="3.30.310.50:FF:000001">
    <property type="entry name" value="Phosphoglucosamine mutase"/>
    <property type="match status" value="1"/>
</dbReference>
<dbReference type="FunFam" id="3.40.120.10:FF:000001">
    <property type="entry name" value="Phosphoglucosamine mutase"/>
    <property type="match status" value="1"/>
</dbReference>
<dbReference type="FunFam" id="3.40.120.10:FF:000002">
    <property type="entry name" value="Phosphoglucosamine mutase"/>
    <property type="match status" value="1"/>
</dbReference>
<dbReference type="Gene3D" id="3.40.120.10">
    <property type="entry name" value="Alpha-D-Glucose-1,6-Bisphosphate, subunit A, domain 3"/>
    <property type="match status" value="3"/>
</dbReference>
<dbReference type="Gene3D" id="3.30.310.50">
    <property type="entry name" value="Alpha-D-phosphohexomutase, C-terminal domain"/>
    <property type="match status" value="1"/>
</dbReference>
<dbReference type="HAMAP" id="MF_01554_B">
    <property type="entry name" value="GlmM_B"/>
    <property type="match status" value="1"/>
</dbReference>
<dbReference type="InterPro" id="IPR005844">
    <property type="entry name" value="A-D-PHexomutase_a/b/a-I"/>
</dbReference>
<dbReference type="InterPro" id="IPR016055">
    <property type="entry name" value="A-D-PHexomutase_a/b/a-I/II/III"/>
</dbReference>
<dbReference type="InterPro" id="IPR005845">
    <property type="entry name" value="A-D-PHexomutase_a/b/a-II"/>
</dbReference>
<dbReference type="InterPro" id="IPR005846">
    <property type="entry name" value="A-D-PHexomutase_a/b/a-III"/>
</dbReference>
<dbReference type="InterPro" id="IPR005843">
    <property type="entry name" value="A-D-PHexomutase_C"/>
</dbReference>
<dbReference type="InterPro" id="IPR036900">
    <property type="entry name" value="A-D-PHexomutase_C_sf"/>
</dbReference>
<dbReference type="InterPro" id="IPR016066">
    <property type="entry name" value="A-D-PHexomutase_CS"/>
</dbReference>
<dbReference type="InterPro" id="IPR005841">
    <property type="entry name" value="Alpha-D-phosphohexomutase_SF"/>
</dbReference>
<dbReference type="InterPro" id="IPR006352">
    <property type="entry name" value="GlmM_bact"/>
</dbReference>
<dbReference type="InterPro" id="IPR050060">
    <property type="entry name" value="Phosphoglucosamine_mutase"/>
</dbReference>
<dbReference type="NCBIfam" id="TIGR01455">
    <property type="entry name" value="glmM"/>
    <property type="match status" value="1"/>
</dbReference>
<dbReference type="PANTHER" id="PTHR42946:SF1">
    <property type="entry name" value="PHOSPHOGLUCOMUTASE (ALPHA-D-GLUCOSE-1,6-BISPHOSPHATE-DEPENDENT)"/>
    <property type="match status" value="1"/>
</dbReference>
<dbReference type="PANTHER" id="PTHR42946">
    <property type="entry name" value="PHOSPHOHEXOSE MUTASE"/>
    <property type="match status" value="1"/>
</dbReference>
<dbReference type="Pfam" id="PF02878">
    <property type="entry name" value="PGM_PMM_I"/>
    <property type="match status" value="1"/>
</dbReference>
<dbReference type="Pfam" id="PF02879">
    <property type="entry name" value="PGM_PMM_II"/>
    <property type="match status" value="1"/>
</dbReference>
<dbReference type="Pfam" id="PF02880">
    <property type="entry name" value="PGM_PMM_III"/>
    <property type="match status" value="1"/>
</dbReference>
<dbReference type="Pfam" id="PF00408">
    <property type="entry name" value="PGM_PMM_IV"/>
    <property type="match status" value="1"/>
</dbReference>
<dbReference type="PRINTS" id="PR00509">
    <property type="entry name" value="PGMPMM"/>
</dbReference>
<dbReference type="SUPFAM" id="SSF55957">
    <property type="entry name" value="Phosphoglucomutase, C-terminal domain"/>
    <property type="match status" value="1"/>
</dbReference>
<dbReference type="SUPFAM" id="SSF53738">
    <property type="entry name" value="Phosphoglucomutase, first 3 domains"/>
    <property type="match status" value="3"/>
</dbReference>
<dbReference type="PROSITE" id="PS00710">
    <property type="entry name" value="PGM_PMM"/>
    <property type="match status" value="1"/>
</dbReference>